<accession>Q9CX83</accession>
<sequence>MGRTREAGCVAAGMVIGAGACYCVYRLTWGKDENEKLWDEEEEEEEEEEEKSCSDKTEKELKTNVGVGARGKPQDDSKSKVEVNVGPENGPGVKKEVHPESQSGGGLEAKAKALFKTLKEQARAKAGRGIRLPNISRNRTLTSSLPCPGGRGGGCHPGRTGSRARNRTSGKVKRKNRSKSNKAPATAWPVRKGKFSFPYKIDDILSAPDLQKVLNILERTNDPFTQEVALVTLGNNAAYSFNQNAIRELGGVPIIAKLIKTRDPIIREKTYNALNNLSVNSENQGKIKTYISQVCDDTMVCRLDSAVQMAGLRLLTNMTVTNHYQHLLSYSFPDFFALLFLGNHFTKIQTMKLIINFTENPAMTRELVSCKVPSELISLFNKEWDREILLNILTLFENINDNIKSEGLASSRKEFSRSSLFFLFKESGVCVKKIKALASHKDLVVKVKVLKVLTKL</sequence>
<protein>
    <recommendedName>
        <fullName>Armadillo repeat-containing X-linked protein 1</fullName>
    </recommendedName>
</protein>
<name>ARMX1_MOUSE</name>
<organism>
    <name type="scientific">Mus musculus</name>
    <name type="common">Mouse</name>
    <dbReference type="NCBI Taxonomy" id="10090"/>
    <lineage>
        <taxon>Eukaryota</taxon>
        <taxon>Metazoa</taxon>
        <taxon>Chordata</taxon>
        <taxon>Craniata</taxon>
        <taxon>Vertebrata</taxon>
        <taxon>Euteleostomi</taxon>
        <taxon>Mammalia</taxon>
        <taxon>Eutheria</taxon>
        <taxon>Euarchontoglires</taxon>
        <taxon>Glires</taxon>
        <taxon>Rodentia</taxon>
        <taxon>Myomorpha</taxon>
        <taxon>Muroidea</taxon>
        <taxon>Muridae</taxon>
        <taxon>Murinae</taxon>
        <taxon>Mus</taxon>
        <taxon>Mus</taxon>
    </lineage>
</organism>
<reference key="1">
    <citation type="journal article" date="2005" name="Science">
        <title>The transcriptional landscape of the mammalian genome.</title>
        <authorList>
            <person name="Carninci P."/>
            <person name="Kasukawa T."/>
            <person name="Katayama S."/>
            <person name="Gough J."/>
            <person name="Frith M.C."/>
            <person name="Maeda N."/>
            <person name="Oyama R."/>
            <person name="Ravasi T."/>
            <person name="Lenhard B."/>
            <person name="Wells C."/>
            <person name="Kodzius R."/>
            <person name="Shimokawa K."/>
            <person name="Bajic V.B."/>
            <person name="Brenner S.E."/>
            <person name="Batalov S."/>
            <person name="Forrest A.R."/>
            <person name="Zavolan M."/>
            <person name="Davis M.J."/>
            <person name="Wilming L.G."/>
            <person name="Aidinis V."/>
            <person name="Allen J.E."/>
            <person name="Ambesi-Impiombato A."/>
            <person name="Apweiler R."/>
            <person name="Aturaliya R.N."/>
            <person name="Bailey T.L."/>
            <person name="Bansal M."/>
            <person name="Baxter L."/>
            <person name="Beisel K.W."/>
            <person name="Bersano T."/>
            <person name="Bono H."/>
            <person name="Chalk A.M."/>
            <person name="Chiu K.P."/>
            <person name="Choudhary V."/>
            <person name="Christoffels A."/>
            <person name="Clutterbuck D.R."/>
            <person name="Crowe M.L."/>
            <person name="Dalla E."/>
            <person name="Dalrymple B.P."/>
            <person name="de Bono B."/>
            <person name="Della Gatta G."/>
            <person name="di Bernardo D."/>
            <person name="Down T."/>
            <person name="Engstrom P."/>
            <person name="Fagiolini M."/>
            <person name="Faulkner G."/>
            <person name="Fletcher C.F."/>
            <person name="Fukushima T."/>
            <person name="Furuno M."/>
            <person name="Futaki S."/>
            <person name="Gariboldi M."/>
            <person name="Georgii-Hemming P."/>
            <person name="Gingeras T.R."/>
            <person name="Gojobori T."/>
            <person name="Green R.E."/>
            <person name="Gustincich S."/>
            <person name="Harbers M."/>
            <person name="Hayashi Y."/>
            <person name="Hensch T.K."/>
            <person name="Hirokawa N."/>
            <person name="Hill D."/>
            <person name="Huminiecki L."/>
            <person name="Iacono M."/>
            <person name="Ikeo K."/>
            <person name="Iwama A."/>
            <person name="Ishikawa T."/>
            <person name="Jakt M."/>
            <person name="Kanapin A."/>
            <person name="Katoh M."/>
            <person name="Kawasawa Y."/>
            <person name="Kelso J."/>
            <person name="Kitamura H."/>
            <person name="Kitano H."/>
            <person name="Kollias G."/>
            <person name="Krishnan S.P."/>
            <person name="Kruger A."/>
            <person name="Kummerfeld S.K."/>
            <person name="Kurochkin I.V."/>
            <person name="Lareau L.F."/>
            <person name="Lazarevic D."/>
            <person name="Lipovich L."/>
            <person name="Liu J."/>
            <person name="Liuni S."/>
            <person name="McWilliam S."/>
            <person name="Madan Babu M."/>
            <person name="Madera M."/>
            <person name="Marchionni L."/>
            <person name="Matsuda H."/>
            <person name="Matsuzawa S."/>
            <person name="Miki H."/>
            <person name="Mignone F."/>
            <person name="Miyake S."/>
            <person name="Morris K."/>
            <person name="Mottagui-Tabar S."/>
            <person name="Mulder N."/>
            <person name="Nakano N."/>
            <person name="Nakauchi H."/>
            <person name="Ng P."/>
            <person name="Nilsson R."/>
            <person name="Nishiguchi S."/>
            <person name="Nishikawa S."/>
            <person name="Nori F."/>
            <person name="Ohara O."/>
            <person name="Okazaki Y."/>
            <person name="Orlando V."/>
            <person name="Pang K.C."/>
            <person name="Pavan W.J."/>
            <person name="Pavesi G."/>
            <person name="Pesole G."/>
            <person name="Petrovsky N."/>
            <person name="Piazza S."/>
            <person name="Reed J."/>
            <person name="Reid J.F."/>
            <person name="Ring B.Z."/>
            <person name="Ringwald M."/>
            <person name="Rost B."/>
            <person name="Ruan Y."/>
            <person name="Salzberg S.L."/>
            <person name="Sandelin A."/>
            <person name="Schneider C."/>
            <person name="Schoenbach C."/>
            <person name="Sekiguchi K."/>
            <person name="Semple C.A."/>
            <person name="Seno S."/>
            <person name="Sessa L."/>
            <person name="Sheng Y."/>
            <person name="Shibata Y."/>
            <person name="Shimada H."/>
            <person name="Shimada K."/>
            <person name="Silva D."/>
            <person name="Sinclair B."/>
            <person name="Sperling S."/>
            <person name="Stupka E."/>
            <person name="Sugiura K."/>
            <person name="Sultana R."/>
            <person name="Takenaka Y."/>
            <person name="Taki K."/>
            <person name="Tammoja K."/>
            <person name="Tan S.L."/>
            <person name="Tang S."/>
            <person name="Taylor M.S."/>
            <person name="Tegner J."/>
            <person name="Teichmann S.A."/>
            <person name="Ueda H.R."/>
            <person name="van Nimwegen E."/>
            <person name="Verardo R."/>
            <person name="Wei C.L."/>
            <person name="Yagi K."/>
            <person name="Yamanishi H."/>
            <person name="Zabarovsky E."/>
            <person name="Zhu S."/>
            <person name="Zimmer A."/>
            <person name="Hide W."/>
            <person name="Bult C."/>
            <person name="Grimmond S.M."/>
            <person name="Teasdale R.D."/>
            <person name="Liu E.T."/>
            <person name="Brusic V."/>
            <person name="Quackenbush J."/>
            <person name="Wahlestedt C."/>
            <person name="Mattick J.S."/>
            <person name="Hume D.A."/>
            <person name="Kai C."/>
            <person name="Sasaki D."/>
            <person name="Tomaru Y."/>
            <person name="Fukuda S."/>
            <person name="Kanamori-Katayama M."/>
            <person name="Suzuki M."/>
            <person name="Aoki J."/>
            <person name="Arakawa T."/>
            <person name="Iida J."/>
            <person name="Imamura K."/>
            <person name="Itoh M."/>
            <person name="Kato T."/>
            <person name="Kawaji H."/>
            <person name="Kawagashira N."/>
            <person name="Kawashima T."/>
            <person name="Kojima M."/>
            <person name="Kondo S."/>
            <person name="Konno H."/>
            <person name="Nakano K."/>
            <person name="Ninomiya N."/>
            <person name="Nishio T."/>
            <person name="Okada M."/>
            <person name="Plessy C."/>
            <person name="Shibata K."/>
            <person name="Shiraki T."/>
            <person name="Suzuki S."/>
            <person name="Tagami M."/>
            <person name="Waki K."/>
            <person name="Watahiki A."/>
            <person name="Okamura-Oho Y."/>
            <person name="Suzuki H."/>
            <person name="Kawai J."/>
            <person name="Hayashizaki Y."/>
        </authorList>
    </citation>
    <scope>NUCLEOTIDE SEQUENCE [LARGE SCALE MRNA]</scope>
    <source>
        <strain>C57BL/6J</strain>
        <tissue>Head</tissue>
        <tissue>Heart</tissue>
    </source>
</reference>
<reference key="2">
    <citation type="journal article" date="2004" name="Genome Res.">
        <title>The status, quality, and expansion of the NIH full-length cDNA project: the Mammalian Gene Collection (MGC).</title>
        <authorList>
            <consortium name="The MGC Project Team"/>
        </authorList>
    </citation>
    <scope>NUCLEOTIDE SEQUENCE [LARGE SCALE MRNA]</scope>
    <source>
        <strain>C57BL/6J</strain>
        <strain>FVB/N-3</strain>
        <tissue>Brain</tissue>
        <tissue>Eye</tissue>
        <tissue>Mammary tumor</tissue>
    </source>
</reference>
<reference key="3">
    <citation type="journal article" date="2012" name="Nat. Commun.">
        <title>The eutherian Armcx genes regulate mitochondrial trafficking in neurons and interact with Miro and Trak2.</title>
        <authorList>
            <person name="Lopez-Domenech G."/>
            <person name="Serrat R."/>
            <person name="Mirra S."/>
            <person name="D'Aniello S."/>
            <person name="Somorjai I."/>
            <person name="Abad A."/>
            <person name="Vitureira N."/>
            <person name="Garcia-Arumi E."/>
            <person name="Alonso M.T."/>
            <person name="Rodriguez-Prados M."/>
            <person name="Burgaya F."/>
            <person name="Andreu A.L."/>
            <person name="Garcia-Sancho J."/>
            <person name="Trullas R."/>
            <person name="Garcia-Fernandez J."/>
            <person name="Soriano E."/>
        </authorList>
    </citation>
    <scope>SUBCELLULAR LOCATION</scope>
    <scope>TISSUE SPECIFICITY</scope>
</reference>
<reference key="4">
    <citation type="journal article" date="2016" name="Neuron">
        <title>The mammalian-specific protein Armcx1 regulates mitochondrial transport during axon regeneration.</title>
        <authorList>
            <person name="Cartoni R."/>
            <person name="Norsworthy M.W."/>
            <person name="Bei F."/>
            <person name="Wang C."/>
            <person name="Li S."/>
            <person name="Zhang Y."/>
            <person name="Gabel C.V."/>
            <person name="Schwarz T.L."/>
            <person name="He Z."/>
        </authorList>
    </citation>
    <scope>SUBCELLULAR LOCATION</scope>
    <scope>INDUCTION</scope>
    <scope>INTERACTION WITH MIRO1</scope>
</reference>
<reference key="5">
    <citation type="journal article" date="2017" name="Neuron">
        <authorList>
            <person name="Cartoni R."/>
            <person name="Norsworthy M.W."/>
            <person name="Bei F."/>
            <person name="Wang C."/>
            <person name="Li S."/>
            <person name="Zhang Y."/>
            <person name="Gabel C.V."/>
            <person name="Schwarz T.L."/>
            <person name="He Z."/>
        </authorList>
    </citation>
    <scope>ERRATUM OF PUBMED:28009275</scope>
</reference>
<feature type="chain" id="PRO_0000191362" description="Armadillo repeat-containing X-linked protein 1">
    <location>
        <begin position="1"/>
        <end position="456"/>
    </location>
</feature>
<feature type="topological domain" description="Mitochondrial intermembrane" evidence="1">
    <location>
        <begin position="1"/>
        <end position="6"/>
    </location>
</feature>
<feature type="transmembrane region" description="Helical; Signal-anchor" evidence="2">
    <location>
        <begin position="7"/>
        <end position="29"/>
    </location>
</feature>
<feature type="topological domain" description="Cytoplasmic" evidence="1">
    <location>
        <begin position="30"/>
        <end position="456"/>
    </location>
</feature>
<feature type="repeat" description="ARM 1" evidence="2">
    <location>
        <begin position="198"/>
        <end position="238"/>
    </location>
</feature>
<feature type="repeat" description="ARM 2" evidence="2">
    <location>
        <begin position="240"/>
        <end position="279"/>
    </location>
</feature>
<feature type="repeat" description="ARM 3" evidence="2">
    <location>
        <begin position="361"/>
        <end position="401"/>
    </location>
</feature>
<feature type="repeat" description="ARM 4" evidence="2">
    <location>
        <begin position="418"/>
        <end position="456"/>
    </location>
</feature>
<feature type="region of interest" description="Mitochondrion outer membrane (MOM)-targeting sequence" evidence="7">
    <location>
        <begin position="1"/>
        <end position="6"/>
    </location>
</feature>
<feature type="region of interest" description="Mitochondrion outer membrane (MOM)-targeting sequence" evidence="7">
    <location>
        <begin position="26"/>
        <end position="36"/>
    </location>
</feature>
<feature type="region of interest" description="Disordered" evidence="3">
    <location>
        <begin position="37"/>
        <end position="106"/>
    </location>
</feature>
<feature type="region of interest" description="Disordered" evidence="3">
    <location>
        <begin position="139"/>
        <end position="186"/>
    </location>
</feature>
<feature type="compositionally biased region" description="Acidic residues" evidence="3">
    <location>
        <begin position="38"/>
        <end position="50"/>
    </location>
</feature>
<feature type="compositionally biased region" description="Basic and acidic residues" evidence="3">
    <location>
        <begin position="51"/>
        <end position="62"/>
    </location>
</feature>
<feature type="compositionally biased region" description="Basic and acidic residues" evidence="3">
    <location>
        <begin position="72"/>
        <end position="81"/>
    </location>
</feature>
<feature type="compositionally biased region" description="Basic residues" evidence="3">
    <location>
        <begin position="162"/>
        <end position="180"/>
    </location>
</feature>
<comment type="function">
    <text evidence="5">Regulates mitochondrial transport during axon regeneration. Increases the proportion of motile mitochondria by recruiting stationary mitochondria into the motile pool. Enhances mitochondria movement and neurite growth in both adult axons and embryonic neurons. Promotes neuronal survival and axon regeneration after nerve injury. May link mitochondria to the Trak1-kinesin motor complex via its interaction with Miro1.</text>
</comment>
<comment type="subunit">
    <text evidence="5">Interacts with MIRO1.</text>
</comment>
<comment type="subcellular location">
    <subcellularLocation>
        <location evidence="4 5">Mitochondrion</location>
    </subcellularLocation>
    <subcellularLocation>
        <location evidence="6">Mitochondrion outer membrane</location>
        <topology evidence="2">Single-pass membrane protein</topology>
    </subcellularLocation>
</comment>
<comment type="tissue specificity">
    <text evidence="4">Widely expressed in the adult nervous tissue, especially in the forebrain, including the cerebral cortex, hippocampus and thalamus.</text>
</comment>
<comment type="induction">
    <text evidence="5">After axonal injury.</text>
</comment>
<comment type="similarity">
    <text evidence="6">Belongs to the eutherian X-chromosome-specific Armcx family.</text>
</comment>
<proteinExistence type="evidence at protein level"/>
<dbReference type="EMBL" id="AK019405">
    <property type="protein sequence ID" value="BAB31705.1"/>
    <property type="molecule type" value="mRNA"/>
</dbReference>
<dbReference type="EMBL" id="AK147002">
    <property type="protein sequence ID" value="BAE27599.1"/>
    <property type="molecule type" value="mRNA"/>
</dbReference>
<dbReference type="EMBL" id="BC021410">
    <property type="protein sequence ID" value="AAH21410.1"/>
    <property type="molecule type" value="mRNA"/>
</dbReference>
<dbReference type="EMBL" id="BC026488">
    <property type="protein sequence ID" value="AAH26488.1"/>
    <property type="molecule type" value="mRNA"/>
</dbReference>
<dbReference type="EMBL" id="BC068228">
    <property type="protein sequence ID" value="AAH68228.1"/>
    <property type="molecule type" value="mRNA"/>
</dbReference>
<dbReference type="CCDS" id="CCDS30398.1"/>
<dbReference type="RefSeq" id="NP_001159849.1">
    <property type="nucleotide sequence ID" value="NM_001166377.1"/>
</dbReference>
<dbReference type="RefSeq" id="NP_001159850.1">
    <property type="nucleotide sequence ID" value="NM_001166378.1"/>
</dbReference>
<dbReference type="RefSeq" id="NP_001159851.1">
    <property type="nucleotide sequence ID" value="NM_001166379.1"/>
</dbReference>
<dbReference type="RefSeq" id="NP_001159852.1">
    <property type="nucleotide sequence ID" value="NM_001166380.1"/>
</dbReference>
<dbReference type="RefSeq" id="NP_084342.1">
    <property type="nucleotide sequence ID" value="NM_030066.3"/>
</dbReference>
<dbReference type="RefSeq" id="XP_006528687.1">
    <property type="nucleotide sequence ID" value="XM_006528624.3"/>
</dbReference>
<dbReference type="RefSeq" id="XP_006528688.1">
    <property type="nucleotide sequence ID" value="XM_006528625.3"/>
</dbReference>
<dbReference type="RefSeq" id="XP_006528689.1">
    <property type="nucleotide sequence ID" value="XM_006528626.3"/>
</dbReference>
<dbReference type="RefSeq" id="XP_006528690.1">
    <property type="nucleotide sequence ID" value="XM_006528627.3"/>
</dbReference>
<dbReference type="RefSeq" id="XP_036018010.1">
    <property type="nucleotide sequence ID" value="XM_036162117.1"/>
</dbReference>
<dbReference type="RefSeq" id="XP_036018011.1">
    <property type="nucleotide sequence ID" value="XM_036162118.1"/>
</dbReference>
<dbReference type="SMR" id="Q9CX83"/>
<dbReference type="BioGRID" id="219279">
    <property type="interactions" value="1"/>
</dbReference>
<dbReference type="FunCoup" id="Q9CX83">
    <property type="interactions" value="885"/>
</dbReference>
<dbReference type="STRING" id="10090.ENSMUSP00000108824"/>
<dbReference type="iPTMnet" id="Q9CX83"/>
<dbReference type="PhosphoSitePlus" id="Q9CX83"/>
<dbReference type="PaxDb" id="10090-ENSMUSP00000108824"/>
<dbReference type="PeptideAtlas" id="Q9CX83"/>
<dbReference type="ProteomicsDB" id="277304"/>
<dbReference type="Pumba" id="Q9CX83"/>
<dbReference type="Antibodypedia" id="28759">
    <property type="antibodies" value="242 antibodies from 29 providers"/>
</dbReference>
<dbReference type="DNASU" id="78248"/>
<dbReference type="Ensembl" id="ENSMUST00000035748.14">
    <property type="protein sequence ID" value="ENSMUSP00000043965.8"/>
    <property type="gene ID" value="ENSMUSG00000033460.15"/>
</dbReference>
<dbReference type="Ensembl" id="ENSMUST00000051256.10">
    <property type="protein sequence ID" value="ENSMUSP00000053909.4"/>
    <property type="gene ID" value="ENSMUSG00000033460.15"/>
</dbReference>
<dbReference type="Ensembl" id="ENSMUST00000113197.2">
    <property type="protein sequence ID" value="ENSMUSP00000108822.2"/>
    <property type="gene ID" value="ENSMUSG00000033460.15"/>
</dbReference>
<dbReference type="Ensembl" id="ENSMUST00000113198.8">
    <property type="protein sequence ID" value="ENSMUSP00000108823.2"/>
    <property type="gene ID" value="ENSMUSG00000033460.15"/>
</dbReference>
<dbReference type="Ensembl" id="ENSMUST00000113199.8">
    <property type="protein sequence ID" value="ENSMUSP00000108824.2"/>
    <property type="gene ID" value="ENSMUSG00000033460.15"/>
</dbReference>
<dbReference type="Ensembl" id="ENSMUST00000113201.8">
    <property type="protein sequence ID" value="ENSMUSP00000108826.2"/>
    <property type="gene ID" value="ENSMUSG00000033460.15"/>
</dbReference>
<dbReference type="GeneID" id="78248"/>
<dbReference type="KEGG" id="mmu:78248"/>
<dbReference type="UCSC" id="uc009ugj.2">
    <property type="organism name" value="mouse"/>
</dbReference>
<dbReference type="AGR" id="MGI:1925498"/>
<dbReference type="CTD" id="51309"/>
<dbReference type="MGI" id="MGI:1925498">
    <property type="gene designation" value="Armcx1"/>
</dbReference>
<dbReference type="VEuPathDB" id="HostDB:ENSMUSG00000033460"/>
<dbReference type="eggNOG" id="ENOG502QYZW">
    <property type="taxonomic scope" value="Eukaryota"/>
</dbReference>
<dbReference type="GeneTree" id="ENSGT00940000162561"/>
<dbReference type="HOGENOM" id="CLU_037187_0_0_1"/>
<dbReference type="InParanoid" id="Q9CX83"/>
<dbReference type="OMA" id="CDDTVIC"/>
<dbReference type="OrthoDB" id="10017790at2759"/>
<dbReference type="PhylomeDB" id="Q9CX83"/>
<dbReference type="TreeFam" id="TF335652"/>
<dbReference type="BioGRID-ORCS" id="78248">
    <property type="hits" value="3 hits in 78 CRISPR screens"/>
</dbReference>
<dbReference type="PRO" id="PR:Q9CX83"/>
<dbReference type="Proteomes" id="UP000000589">
    <property type="component" value="Chromosome X"/>
</dbReference>
<dbReference type="RNAct" id="Q9CX83">
    <property type="molecule type" value="protein"/>
</dbReference>
<dbReference type="Bgee" id="ENSMUSG00000033460">
    <property type="expression patterns" value="Expressed in superior cervical ganglion and 238 other cell types or tissues"/>
</dbReference>
<dbReference type="GO" id="GO:0005741">
    <property type="term" value="C:mitochondrial outer membrane"/>
    <property type="evidence" value="ECO:0007669"/>
    <property type="project" value="UniProtKB-SubCell"/>
</dbReference>
<dbReference type="GO" id="GO:0061484">
    <property type="term" value="P:hematopoietic stem cell homeostasis"/>
    <property type="evidence" value="ECO:0000315"/>
    <property type="project" value="MGI"/>
</dbReference>
<dbReference type="Gene3D" id="1.25.10.10">
    <property type="entry name" value="Leucine-rich Repeat Variant"/>
    <property type="match status" value="1"/>
</dbReference>
<dbReference type="InterPro" id="IPR011989">
    <property type="entry name" value="ARM-like"/>
</dbReference>
<dbReference type="InterPro" id="IPR006911">
    <property type="entry name" value="ARM-rpt_dom"/>
</dbReference>
<dbReference type="InterPro" id="IPR016024">
    <property type="entry name" value="ARM-type_fold"/>
</dbReference>
<dbReference type="InterPro" id="IPR000225">
    <property type="entry name" value="Armadillo"/>
</dbReference>
<dbReference type="InterPro" id="IPR051303">
    <property type="entry name" value="Armcx_regulator"/>
</dbReference>
<dbReference type="PANTHER" id="PTHR15712">
    <property type="entry name" value="ARMADILLO REPEAT CONTAINING PROTEIN"/>
    <property type="match status" value="1"/>
</dbReference>
<dbReference type="PANTHER" id="PTHR15712:SF14">
    <property type="entry name" value="ARMADILLO REPEAT-CONTAINING X-LINKED PROTEIN 1"/>
    <property type="match status" value="1"/>
</dbReference>
<dbReference type="Pfam" id="PF04826">
    <property type="entry name" value="Arm_2"/>
    <property type="match status" value="1"/>
</dbReference>
<dbReference type="SMART" id="SM00185">
    <property type="entry name" value="ARM"/>
    <property type="match status" value="2"/>
</dbReference>
<dbReference type="SUPFAM" id="SSF48371">
    <property type="entry name" value="ARM repeat"/>
    <property type="match status" value="1"/>
</dbReference>
<dbReference type="PROSITE" id="PS50176">
    <property type="entry name" value="ARM_REPEAT"/>
    <property type="match status" value="1"/>
</dbReference>
<keyword id="KW-0472">Membrane</keyword>
<keyword id="KW-0496">Mitochondrion</keyword>
<keyword id="KW-1000">Mitochondrion outer membrane</keyword>
<keyword id="KW-1185">Reference proteome</keyword>
<keyword id="KW-0677">Repeat</keyword>
<keyword id="KW-0735">Signal-anchor</keyword>
<keyword id="KW-0812">Transmembrane</keyword>
<keyword id="KW-1133">Transmembrane helix</keyword>
<evidence type="ECO:0000250" key="1">
    <source>
        <dbReference type="UniProtKB" id="Q8BHS6"/>
    </source>
</evidence>
<evidence type="ECO:0000255" key="2"/>
<evidence type="ECO:0000256" key="3">
    <source>
        <dbReference type="SAM" id="MobiDB-lite"/>
    </source>
</evidence>
<evidence type="ECO:0000269" key="4">
    <source>
    </source>
</evidence>
<evidence type="ECO:0000269" key="5">
    <source>
    </source>
</evidence>
<evidence type="ECO:0000305" key="6"/>
<evidence type="ECO:0000305" key="7">
    <source>
    </source>
</evidence>
<gene>
    <name type="primary">Armcx1</name>
</gene>